<proteinExistence type="inferred from homology"/>
<reference key="1">
    <citation type="journal article" date="2010" name="Stand. Genomic Sci.">
        <title>Complete genome sequence of Rhizobium leguminosarum bv trifolii strain WSM2304, an effective microsymbiont of the South American clover Trifolium polymorphum.</title>
        <authorList>
            <person name="Reeve W."/>
            <person name="O'Hara G."/>
            <person name="Chain P."/>
            <person name="Ardley J."/>
            <person name="Brau L."/>
            <person name="Nandesena K."/>
            <person name="Tiwari R."/>
            <person name="Malfatti S."/>
            <person name="Kiss H."/>
            <person name="Lapidus A."/>
            <person name="Copeland A."/>
            <person name="Nolan M."/>
            <person name="Land M."/>
            <person name="Ivanova N."/>
            <person name="Mavromatis K."/>
            <person name="Markowitz V."/>
            <person name="Kyrpides N."/>
            <person name="Melino V."/>
            <person name="Denton M."/>
            <person name="Yates R."/>
            <person name="Howieson J."/>
        </authorList>
    </citation>
    <scope>NUCLEOTIDE SEQUENCE [LARGE SCALE GENOMIC DNA]</scope>
    <source>
        <strain>WSM2304</strain>
    </source>
</reference>
<accession>B5ZZ62</accession>
<sequence>MPAYRSRTTTHGRNMAGARGLWRATGMKDSDFGKPIIAVVNSFTQFVPGHVHLKDLGQLVAREIEAAGGVAKEFNTIAVDDGIAMGHDGMLYSLPSRELIADSVEYMVNAHCADAMVCISNCDKITPGMLMASLRLNIPTVFVSGGPMEAGKVVLHGKTHALDLVDAMVAAADEKISDEDVQTIERSACPTCGSCSGMFTANSMNCLTEALGLSLPGNGSTLATHADRKRLFVEAGHLIVDLARRYYEQDDIKALPRTIASKQAFENAMALDIAMGGSTNTVLHILAAAHEGEIDFTMADIDALSRRVPCLSKVAPAKSDVHMEDVHRAGGIMSILGELDKGGLLNRNCPTVHAETLGDAIDRWDITRTTSETVRNFYRAAPGGIPTQVAFSQEARWDELDTDRQNGVIRSVEHPFSRDGGLAVLKGNLAVDGCIVKTAGVDESILKFSGPARVFESQDASVKAILANEVKAGDVVVIRYEGPKGGPGMQEMLYPTSYLKSKGLGKACALITDGRFSGGTSGLSIGHASPEAANGGTIGLVREGDMIDIDIPNRTISLRVDEAELAARRADQDAKGWHPAEVRKRNVTTALKAYAAFATSADRGAVRDLNAR</sequence>
<keyword id="KW-0001">2Fe-2S</keyword>
<keyword id="KW-0028">Amino-acid biosynthesis</keyword>
<keyword id="KW-0100">Branched-chain amino acid biosynthesis</keyword>
<keyword id="KW-0408">Iron</keyword>
<keyword id="KW-0411">Iron-sulfur</keyword>
<keyword id="KW-0456">Lyase</keyword>
<keyword id="KW-0460">Magnesium</keyword>
<keyword id="KW-0479">Metal-binding</keyword>
<keyword id="KW-1185">Reference proteome</keyword>
<dbReference type="EC" id="4.2.1.9" evidence="1"/>
<dbReference type="EMBL" id="CP001191">
    <property type="protein sequence ID" value="ACI54655.1"/>
    <property type="molecule type" value="Genomic_DNA"/>
</dbReference>
<dbReference type="RefSeq" id="WP_012557371.1">
    <property type="nucleotide sequence ID" value="NC_011369.1"/>
</dbReference>
<dbReference type="SMR" id="B5ZZ62"/>
<dbReference type="STRING" id="395492.Rleg2_1361"/>
<dbReference type="KEGG" id="rlt:Rleg2_1361"/>
<dbReference type="eggNOG" id="COG0129">
    <property type="taxonomic scope" value="Bacteria"/>
</dbReference>
<dbReference type="HOGENOM" id="CLU_014271_4_2_5"/>
<dbReference type="UniPathway" id="UPA00047">
    <property type="reaction ID" value="UER00057"/>
</dbReference>
<dbReference type="UniPathway" id="UPA00049">
    <property type="reaction ID" value="UER00061"/>
</dbReference>
<dbReference type="Proteomes" id="UP000008330">
    <property type="component" value="Chromosome"/>
</dbReference>
<dbReference type="GO" id="GO:0005829">
    <property type="term" value="C:cytosol"/>
    <property type="evidence" value="ECO:0007669"/>
    <property type="project" value="TreeGrafter"/>
</dbReference>
<dbReference type="GO" id="GO:0051537">
    <property type="term" value="F:2 iron, 2 sulfur cluster binding"/>
    <property type="evidence" value="ECO:0007669"/>
    <property type="project" value="UniProtKB-UniRule"/>
</dbReference>
<dbReference type="GO" id="GO:0004160">
    <property type="term" value="F:dihydroxy-acid dehydratase activity"/>
    <property type="evidence" value="ECO:0007669"/>
    <property type="project" value="UniProtKB-UniRule"/>
</dbReference>
<dbReference type="GO" id="GO:0000287">
    <property type="term" value="F:magnesium ion binding"/>
    <property type="evidence" value="ECO:0007669"/>
    <property type="project" value="UniProtKB-UniRule"/>
</dbReference>
<dbReference type="GO" id="GO:0009097">
    <property type="term" value="P:isoleucine biosynthetic process"/>
    <property type="evidence" value="ECO:0007669"/>
    <property type="project" value="UniProtKB-UniRule"/>
</dbReference>
<dbReference type="GO" id="GO:0009099">
    <property type="term" value="P:L-valine biosynthetic process"/>
    <property type="evidence" value="ECO:0007669"/>
    <property type="project" value="UniProtKB-UniRule"/>
</dbReference>
<dbReference type="FunFam" id="3.50.30.80:FF:000001">
    <property type="entry name" value="Dihydroxy-acid dehydratase"/>
    <property type="match status" value="1"/>
</dbReference>
<dbReference type="Gene3D" id="3.50.30.80">
    <property type="entry name" value="IlvD/EDD C-terminal domain-like"/>
    <property type="match status" value="1"/>
</dbReference>
<dbReference type="HAMAP" id="MF_00012">
    <property type="entry name" value="IlvD"/>
    <property type="match status" value="1"/>
</dbReference>
<dbReference type="InterPro" id="IPR042096">
    <property type="entry name" value="Dihydro-acid_dehy_C"/>
</dbReference>
<dbReference type="InterPro" id="IPR004404">
    <property type="entry name" value="DihydroxyA_deHydtase"/>
</dbReference>
<dbReference type="InterPro" id="IPR020558">
    <property type="entry name" value="DiOHA_6PGluconate_deHydtase_CS"/>
</dbReference>
<dbReference type="InterPro" id="IPR056740">
    <property type="entry name" value="ILV_EDD_C"/>
</dbReference>
<dbReference type="InterPro" id="IPR000581">
    <property type="entry name" value="ILV_EDD_N"/>
</dbReference>
<dbReference type="InterPro" id="IPR037237">
    <property type="entry name" value="IlvD/EDD_N"/>
</dbReference>
<dbReference type="NCBIfam" id="TIGR00110">
    <property type="entry name" value="ilvD"/>
    <property type="match status" value="1"/>
</dbReference>
<dbReference type="NCBIfam" id="NF009103">
    <property type="entry name" value="PRK12448.1"/>
    <property type="match status" value="1"/>
</dbReference>
<dbReference type="PANTHER" id="PTHR43661">
    <property type="entry name" value="D-XYLONATE DEHYDRATASE"/>
    <property type="match status" value="1"/>
</dbReference>
<dbReference type="PANTHER" id="PTHR43661:SF3">
    <property type="entry name" value="D-XYLONATE DEHYDRATASE YAGF-RELATED"/>
    <property type="match status" value="1"/>
</dbReference>
<dbReference type="Pfam" id="PF24877">
    <property type="entry name" value="ILV_EDD_C"/>
    <property type="match status" value="1"/>
</dbReference>
<dbReference type="Pfam" id="PF00920">
    <property type="entry name" value="ILVD_EDD_N"/>
    <property type="match status" value="1"/>
</dbReference>
<dbReference type="SUPFAM" id="SSF143975">
    <property type="entry name" value="IlvD/EDD N-terminal domain-like"/>
    <property type="match status" value="1"/>
</dbReference>
<dbReference type="SUPFAM" id="SSF52016">
    <property type="entry name" value="LeuD/IlvD-like"/>
    <property type="match status" value="1"/>
</dbReference>
<dbReference type="PROSITE" id="PS00886">
    <property type="entry name" value="ILVD_EDD_1"/>
    <property type="match status" value="1"/>
</dbReference>
<dbReference type="PROSITE" id="PS00887">
    <property type="entry name" value="ILVD_EDD_2"/>
    <property type="match status" value="1"/>
</dbReference>
<comment type="function">
    <text evidence="1">Functions in the biosynthesis of branched-chain amino acids. Catalyzes the dehydration of (2R,3R)-2,3-dihydroxy-3-methylpentanoate (2,3-dihydroxy-3-methylvalerate) into 2-oxo-3-methylpentanoate (2-oxo-3-methylvalerate) and of (2R)-2,3-dihydroxy-3-methylbutanoate (2,3-dihydroxyisovalerate) into 2-oxo-3-methylbutanoate (2-oxoisovalerate), the penultimate precursor to L-isoleucine and L-valine, respectively.</text>
</comment>
<comment type="catalytic activity">
    <reaction evidence="1">
        <text>(2R)-2,3-dihydroxy-3-methylbutanoate = 3-methyl-2-oxobutanoate + H2O</text>
        <dbReference type="Rhea" id="RHEA:24809"/>
        <dbReference type="ChEBI" id="CHEBI:11851"/>
        <dbReference type="ChEBI" id="CHEBI:15377"/>
        <dbReference type="ChEBI" id="CHEBI:49072"/>
        <dbReference type="EC" id="4.2.1.9"/>
    </reaction>
    <physiologicalReaction direction="left-to-right" evidence="1">
        <dbReference type="Rhea" id="RHEA:24810"/>
    </physiologicalReaction>
</comment>
<comment type="catalytic activity">
    <reaction evidence="1">
        <text>(2R,3R)-2,3-dihydroxy-3-methylpentanoate = (S)-3-methyl-2-oxopentanoate + H2O</text>
        <dbReference type="Rhea" id="RHEA:27694"/>
        <dbReference type="ChEBI" id="CHEBI:15377"/>
        <dbReference type="ChEBI" id="CHEBI:35146"/>
        <dbReference type="ChEBI" id="CHEBI:49258"/>
        <dbReference type="EC" id="4.2.1.9"/>
    </reaction>
    <physiologicalReaction direction="left-to-right" evidence="1">
        <dbReference type="Rhea" id="RHEA:27695"/>
    </physiologicalReaction>
</comment>
<comment type="cofactor">
    <cofactor evidence="1">
        <name>[2Fe-2S] cluster</name>
        <dbReference type="ChEBI" id="CHEBI:190135"/>
    </cofactor>
    <text evidence="1">Binds 1 [2Fe-2S] cluster per subunit. This cluster acts as a Lewis acid cofactor.</text>
</comment>
<comment type="cofactor">
    <cofactor evidence="1">
        <name>Mg(2+)</name>
        <dbReference type="ChEBI" id="CHEBI:18420"/>
    </cofactor>
</comment>
<comment type="pathway">
    <text evidence="1">Amino-acid biosynthesis; L-isoleucine biosynthesis; L-isoleucine from 2-oxobutanoate: step 3/4.</text>
</comment>
<comment type="pathway">
    <text evidence="1">Amino-acid biosynthesis; L-valine biosynthesis; L-valine from pyruvate: step 3/4.</text>
</comment>
<comment type="subunit">
    <text evidence="1">Homodimer.</text>
</comment>
<comment type="similarity">
    <text evidence="1">Belongs to the IlvD/Edd family.</text>
</comment>
<evidence type="ECO:0000255" key="1">
    <source>
        <dbReference type="HAMAP-Rule" id="MF_00012"/>
    </source>
</evidence>
<name>ILVD_RHILW</name>
<feature type="chain" id="PRO_1000089403" description="Dihydroxy-acid dehydratase">
    <location>
        <begin position="1"/>
        <end position="612"/>
    </location>
</feature>
<feature type="active site" description="Proton acceptor" evidence="1">
    <location>
        <position position="517"/>
    </location>
</feature>
<feature type="binding site" evidence="1">
    <location>
        <position position="81"/>
    </location>
    <ligand>
        <name>Mg(2+)</name>
        <dbReference type="ChEBI" id="CHEBI:18420"/>
    </ligand>
</feature>
<feature type="binding site" evidence="1">
    <location>
        <position position="122"/>
    </location>
    <ligand>
        <name>[2Fe-2S] cluster</name>
        <dbReference type="ChEBI" id="CHEBI:190135"/>
    </ligand>
</feature>
<feature type="binding site" evidence="1">
    <location>
        <position position="123"/>
    </location>
    <ligand>
        <name>Mg(2+)</name>
        <dbReference type="ChEBI" id="CHEBI:18420"/>
    </ligand>
</feature>
<feature type="binding site" description="via carbamate group" evidence="1">
    <location>
        <position position="124"/>
    </location>
    <ligand>
        <name>Mg(2+)</name>
        <dbReference type="ChEBI" id="CHEBI:18420"/>
    </ligand>
</feature>
<feature type="binding site" evidence="1">
    <location>
        <position position="195"/>
    </location>
    <ligand>
        <name>[2Fe-2S] cluster</name>
        <dbReference type="ChEBI" id="CHEBI:190135"/>
    </ligand>
</feature>
<feature type="binding site" evidence="1">
    <location>
        <position position="491"/>
    </location>
    <ligand>
        <name>Mg(2+)</name>
        <dbReference type="ChEBI" id="CHEBI:18420"/>
    </ligand>
</feature>
<feature type="modified residue" description="N6-carboxylysine" evidence="1">
    <location>
        <position position="124"/>
    </location>
</feature>
<protein>
    <recommendedName>
        <fullName evidence="1">Dihydroxy-acid dehydratase</fullName>
        <shortName evidence="1">DAD</shortName>
        <ecNumber evidence="1">4.2.1.9</ecNumber>
    </recommendedName>
</protein>
<gene>
    <name evidence="1" type="primary">ilvD</name>
    <name type="ordered locus">Rleg2_1361</name>
</gene>
<organism>
    <name type="scientific">Rhizobium leguminosarum bv. trifolii (strain WSM2304)</name>
    <dbReference type="NCBI Taxonomy" id="395492"/>
    <lineage>
        <taxon>Bacteria</taxon>
        <taxon>Pseudomonadati</taxon>
        <taxon>Pseudomonadota</taxon>
        <taxon>Alphaproteobacteria</taxon>
        <taxon>Hyphomicrobiales</taxon>
        <taxon>Rhizobiaceae</taxon>
        <taxon>Rhizobium/Agrobacterium group</taxon>
        <taxon>Rhizobium</taxon>
    </lineage>
</organism>